<name>GLYT3_ARATH</name>
<protein>
    <recommendedName>
        <fullName>Probable glycosyltransferase At5g03795</fullName>
        <ecNumber>2.4.-.-</ecNumber>
    </recommendedName>
</protein>
<reference key="1">
    <citation type="journal article" date="1997" name="DNA Res.">
        <title>Structural analysis of Arabidopsis thaliana chromosome 5. I. Sequence features of the 1.6 Mb regions covered by twenty physically assigned P1 clones.</title>
        <authorList>
            <person name="Sato S."/>
            <person name="Kotani H."/>
            <person name="Nakamura Y."/>
            <person name="Kaneko T."/>
            <person name="Asamizu E."/>
            <person name="Fukami M."/>
            <person name="Miyajima N."/>
            <person name="Tabata S."/>
        </authorList>
    </citation>
    <scope>NUCLEOTIDE SEQUENCE [LARGE SCALE GENOMIC DNA]</scope>
    <source>
        <strain>cv. Columbia</strain>
    </source>
</reference>
<reference key="2">
    <citation type="journal article" date="2017" name="Plant J.">
        <title>Araport11: a complete reannotation of the Arabidopsis thaliana reference genome.</title>
        <authorList>
            <person name="Cheng C.Y."/>
            <person name="Krishnakumar V."/>
            <person name="Chan A.P."/>
            <person name="Thibaud-Nissen F."/>
            <person name="Schobel S."/>
            <person name="Town C.D."/>
        </authorList>
    </citation>
    <scope>GENOME REANNOTATION</scope>
    <source>
        <strain>cv. Columbia</strain>
    </source>
</reference>
<reference key="3">
    <citation type="journal article" date="2008" name="Plant Cell">
        <title>Identification of a xylogalacturonan xylosyltransferase involved in pectin biosynthesis in Arabidopsis.</title>
        <authorList>
            <person name="Jensen J.K."/>
            <person name="Sorensen S.O."/>
            <person name="Harholt J."/>
            <person name="Geshi N."/>
            <person name="Sakuragi Y."/>
            <person name="Moller I."/>
            <person name="Zandleven J."/>
            <person name="Bernal A.J."/>
            <person name="Jensen N.B."/>
            <person name="Sorensen C."/>
            <person name="Pauly M."/>
            <person name="Beldman G."/>
            <person name="Willats W.G."/>
            <person name="Scheller H.V."/>
        </authorList>
    </citation>
    <scope>IDENTIFICATION</scope>
</reference>
<comment type="function">
    <text>May be involved in cell wall biosynthesis.</text>
</comment>
<comment type="subcellular location">
    <subcellularLocation>
        <location evidence="1">Golgi apparatus membrane</location>
        <topology evidence="1">Single-pass type II membrane protein</topology>
    </subcellularLocation>
</comment>
<comment type="similarity">
    <text evidence="3">Belongs to the glycosyltransferase 47 family.</text>
</comment>
<comment type="sequence caution" evidence="3">
    <conflict type="erroneous gene model prediction">
        <sequence resource="EMBL-CDS" id="BAB08605"/>
    </conflict>
</comment>
<accession>Q9FFN2</accession>
<proteinExistence type="inferred from homology"/>
<gene>
    <name type="ordered locus">At5g03795</name>
    <name type="ORF">MED24</name>
</gene>
<dbReference type="EC" id="2.4.-.-"/>
<dbReference type="EMBL" id="AB005235">
    <property type="protein sequence ID" value="BAB08605.1"/>
    <property type="status" value="ALT_SEQ"/>
    <property type="molecule type" value="Genomic_DNA"/>
</dbReference>
<dbReference type="EMBL" id="CP002688">
    <property type="protein sequence ID" value="AED90655.1"/>
    <property type="molecule type" value="Genomic_DNA"/>
</dbReference>
<dbReference type="RefSeq" id="NP_001031828.1">
    <property type="nucleotide sequence ID" value="NM_001036751.2"/>
</dbReference>
<dbReference type="SMR" id="Q9FFN2"/>
<dbReference type="FunCoup" id="Q9FFN2">
    <property type="interactions" value="2"/>
</dbReference>
<dbReference type="STRING" id="3702.Q9FFN2"/>
<dbReference type="CAZy" id="GT47">
    <property type="family name" value="Glycosyltransferase Family 47"/>
</dbReference>
<dbReference type="GlyGen" id="Q9FFN2">
    <property type="glycosylation" value="5 sites"/>
</dbReference>
<dbReference type="PaxDb" id="3702-AT5G03795.1"/>
<dbReference type="ProteomicsDB" id="247372"/>
<dbReference type="EnsemblPlants" id="AT5G03795.1">
    <property type="protein sequence ID" value="AT5G03795.1"/>
    <property type="gene ID" value="AT5G03795"/>
</dbReference>
<dbReference type="GeneID" id="3770626"/>
<dbReference type="Gramene" id="AT5G03795.1">
    <property type="protein sequence ID" value="AT5G03795.1"/>
    <property type="gene ID" value="AT5G03795"/>
</dbReference>
<dbReference type="KEGG" id="ath:AT5G03795"/>
<dbReference type="Araport" id="AT5G03795"/>
<dbReference type="TAIR" id="AT5G03795"/>
<dbReference type="eggNOG" id="KOG1021">
    <property type="taxonomic scope" value="Eukaryota"/>
</dbReference>
<dbReference type="eggNOG" id="KOG4197">
    <property type="taxonomic scope" value="Eukaryota"/>
</dbReference>
<dbReference type="HOGENOM" id="CLU_025166_1_4_1"/>
<dbReference type="InParanoid" id="Q9FFN2"/>
<dbReference type="OMA" id="PEWGVGD"/>
<dbReference type="PhylomeDB" id="Q9FFN2"/>
<dbReference type="BioCyc" id="ARA:AT5G03795-MONOMER"/>
<dbReference type="PRO" id="PR:Q9FFN2"/>
<dbReference type="Proteomes" id="UP000006548">
    <property type="component" value="Chromosome 5"/>
</dbReference>
<dbReference type="ExpressionAtlas" id="Q9FFN2">
    <property type="expression patterns" value="baseline and differential"/>
</dbReference>
<dbReference type="GO" id="GO:0000139">
    <property type="term" value="C:Golgi membrane"/>
    <property type="evidence" value="ECO:0007669"/>
    <property type="project" value="UniProtKB-SubCell"/>
</dbReference>
<dbReference type="GO" id="GO:0016757">
    <property type="term" value="F:glycosyltransferase activity"/>
    <property type="evidence" value="ECO:0007669"/>
    <property type="project" value="UniProtKB-KW"/>
</dbReference>
<dbReference type="GO" id="GO:0071555">
    <property type="term" value="P:cell wall organization"/>
    <property type="evidence" value="ECO:0007669"/>
    <property type="project" value="UniProtKB-KW"/>
</dbReference>
<dbReference type="GO" id="GO:0006486">
    <property type="term" value="P:protein glycosylation"/>
    <property type="evidence" value="ECO:0007669"/>
    <property type="project" value="InterPro"/>
</dbReference>
<dbReference type="Gene3D" id="3.40.50.2000">
    <property type="entry name" value="Glycogen Phosphorylase B"/>
    <property type="match status" value="1"/>
</dbReference>
<dbReference type="InterPro" id="IPR004263">
    <property type="entry name" value="Exostosin"/>
</dbReference>
<dbReference type="InterPro" id="IPR040911">
    <property type="entry name" value="Exostosin_GT47"/>
</dbReference>
<dbReference type="PANTHER" id="PTHR11062">
    <property type="entry name" value="EXOSTOSIN HEPARAN SULFATE GLYCOSYLTRANSFERASE -RELATED"/>
    <property type="match status" value="1"/>
</dbReference>
<dbReference type="PANTHER" id="PTHR11062:SF207">
    <property type="entry name" value="OS07G0188700 PROTEIN"/>
    <property type="match status" value="1"/>
</dbReference>
<dbReference type="Pfam" id="PF03016">
    <property type="entry name" value="Exostosin_GT47"/>
    <property type="match status" value="1"/>
</dbReference>
<dbReference type="SUPFAM" id="SSF53756">
    <property type="entry name" value="UDP-Glycosyltransferase/glycogen phosphorylase"/>
    <property type="match status" value="1"/>
</dbReference>
<organism>
    <name type="scientific">Arabidopsis thaliana</name>
    <name type="common">Mouse-ear cress</name>
    <dbReference type="NCBI Taxonomy" id="3702"/>
    <lineage>
        <taxon>Eukaryota</taxon>
        <taxon>Viridiplantae</taxon>
        <taxon>Streptophyta</taxon>
        <taxon>Embryophyta</taxon>
        <taxon>Tracheophyta</taxon>
        <taxon>Spermatophyta</taxon>
        <taxon>Magnoliopsida</taxon>
        <taxon>eudicotyledons</taxon>
        <taxon>Gunneridae</taxon>
        <taxon>Pentapetalae</taxon>
        <taxon>rosids</taxon>
        <taxon>malvids</taxon>
        <taxon>Brassicales</taxon>
        <taxon>Brassicaceae</taxon>
        <taxon>Camelineae</taxon>
        <taxon>Arabidopsis</taxon>
    </lineage>
</organism>
<sequence>MGDEDVDGKCKNMSACSSTTSYSTKLFLFMVPLVVISGFVFVNIGPKDSTSLLTSLSTTTSHLPPPFLSTAPAPAPSPLLPEILPSLPASSLSTKVESIQGDYNRTIQLNMINVTATSNNVSSTASLEPKKRRVLSNLEKIEFKLQKARASIKAASMDDPVDDPDYVPLGPMYWNAKVFHRSYLEMEKQFKIYVYKEGEPPLFHDGPCKSIYSMEGSFIYEIETDTRFRTNNPDKAHVFYLPFSVVKMVRYVYERNSRDFSPIRNTVKDYINLVGDKYPYWNRSIGADHFILSCHDWGPEASFSHPHLGHNSIRALCNANTSERFKPRKDVSIPEINLRTGSLTGLVGGPSPSSRPILAFFAGGVHGPVRPVLLQHWENKDNDIRVHKYLPRGTSYSDMMRNSKFCICPSGYEVASPRIVEALYSGCVPVLINSGYVPPFSDVLNWRSFSVIVSVEDIPNLKTILTSISPRQYLRMYRRVLKVRRHFEVNSPAKRFDVFHMILHSIWVRRLNVKIREV</sequence>
<keyword id="KW-0961">Cell wall biogenesis/degradation</keyword>
<keyword id="KW-0325">Glycoprotein</keyword>
<keyword id="KW-0328">Glycosyltransferase</keyword>
<keyword id="KW-0333">Golgi apparatus</keyword>
<keyword id="KW-0472">Membrane</keyword>
<keyword id="KW-1185">Reference proteome</keyword>
<keyword id="KW-0735">Signal-anchor</keyword>
<keyword id="KW-0808">Transferase</keyword>
<keyword id="KW-0812">Transmembrane</keyword>
<keyword id="KW-1133">Transmembrane helix</keyword>
<feature type="chain" id="PRO_0000392294" description="Probable glycosyltransferase At5g03795">
    <location>
        <begin position="1"/>
        <end position="518"/>
    </location>
</feature>
<feature type="topological domain" description="Cytoplasmic" evidence="2">
    <location>
        <begin position="1"/>
        <end position="25"/>
    </location>
</feature>
<feature type="transmembrane region" description="Helical; Signal-anchor for type II membrane protein" evidence="2">
    <location>
        <begin position="26"/>
        <end position="46"/>
    </location>
</feature>
<feature type="topological domain" description="Lumenal" evidence="2">
    <location>
        <begin position="47"/>
        <end position="518"/>
    </location>
</feature>
<feature type="glycosylation site" description="N-linked (GlcNAc...) asparagine" evidence="2">
    <location>
        <position position="104"/>
    </location>
</feature>
<feature type="glycosylation site" description="N-linked (GlcNAc...) asparagine" evidence="2">
    <location>
        <position position="113"/>
    </location>
</feature>
<feature type="glycosylation site" description="N-linked (GlcNAc...) asparagine" evidence="2">
    <location>
        <position position="120"/>
    </location>
</feature>
<feature type="glycosylation site" description="N-linked (GlcNAc...) asparagine" evidence="2">
    <location>
        <position position="282"/>
    </location>
</feature>
<feature type="glycosylation site" description="N-linked (GlcNAc...) asparagine" evidence="2">
    <location>
        <position position="320"/>
    </location>
</feature>
<evidence type="ECO:0000250" key="1"/>
<evidence type="ECO:0000255" key="2"/>
<evidence type="ECO:0000305" key="3"/>